<organism>
    <name type="scientific">Xenopus laevis</name>
    <name type="common">African clawed frog</name>
    <dbReference type="NCBI Taxonomy" id="8355"/>
    <lineage>
        <taxon>Eukaryota</taxon>
        <taxon>Metazoa</taxon>
        <taxon>Chordata</taxon>
        <taxon>Craniata</taxon>
        <taxon>Vertebrata</taxon>
        <taxon>Euteleostomi</taxon>
        <taxon>Amphibia</taxon>
        <taxon>Batrachia</taxon>
        <taxon>Anura</taxon>
        <taxon>Pipoidea</taxon>
        <taxon>Pipidae</taxon>
        <taxon>Xenopodinae</taxon>
        <taxon>Xenopus</taxon>
        <taxon>Xenopus</taxon>
    </lineage>
</organism>
<name>SMO1B_XENLA</name>
<protein>
    <recommendedName>
        <fullName>Small ubiquitin-related modifier 1-B</fullName>
        <shortName>SUMO-1-B</shortName>
    </recommendedName>
</protein>
<keyword id="KW-1003">Cell membrane</keyword>
<keyword id="KW-0963">Cytoplasm</keyword>
<keyword id="KW-1017">Isopeptide bond</keyword>
<keyword id="KW-0472">Membrane</keyword>
<keyword id="KW-0539">Nucleus</keyword>
<keyword id="KW-1185">Reference proteome</keyword>
<keyword id="KW-0833">Ubl conjugation pathway</keyword>
<sequence length="102" mass="11630">MSDQEAKPSSEDLGDKKEGGDYIKLKVIGQDSSEIHFKVKMTTHLKKLKESYCQRQGVPMNSLRFLFEGQRISDHQTPKELGMEEEDVIEVYQEQTGGHSTI</sequence>
<feature type="chain" id="PRO_0000267620" description="Small ubiquitin-related modifier 1-B">
    <location>
        <begin position="1"/>
        <end position="98"/>
    </location>
</feature>
<feature type="propeptide" id="PRO_0000267621" evidence="1">
    <location>
        <begin position="99"/>
        <end position="102"/>
    </location>
</feature>
<feature type="domain" description="Ubiquitin-like" evidence="5">
    <location>
        <begin position="21"/>
        <end position="98"/>
    </location>
</feature>
<feature type="cross-link" description="Glycyl lysine isopeptide (Gly-Lys) (interchain with K-? in acceptor proteins)" evidence="5">
    <location>
        <position position="98"/>
    </location>
</feature>
<reference key="1">
    <citation type="submission" date="2005-02" db="EMBL/GenBank/DDBJ databases">
        <authorList>
            <consortium name="NIH - Xenopus Gene Collection (XGC) project"/>
        </authorList>
    </citation>
    <scope>NUCLEOTIDE SEQUENCE [LARGE SCALE MRNA]</scope>
    <source>
        <tissue>Egg</tissue>
    </source>
</reference>
<accession>Q5EAX4</accession>
<proteinExistence type="inferred from homology"/>
<gene>
    <name type="primary">sumo1-b</name>
</gene>
<dbReference type="EMBL" id="BC090210">
    <property type="protein sequence ID" value="AAH90210.1"/>
    <property type="molecule type" value="mRNA"/>
</dbReference>
<dbReference type="SMR" id="Q5EAX4"/>
<dbReference type="BioGRID" id="607888">
    <property type="interactions" value="1"/>
</dbReference>
<dbReference type="DNASU" id="779181"/>
<dbReference type="GeneID" id="779181"/>
<dbReference type="KEGG" id="xla:779181"/>
<dbReference type="AGR" id="Xenbase:XB-GENE-978496"/>
<dbReference type="CTD" id="779181"/>
<dbReference type="Xenbase" id="XB-GENE-978496">
    <property type="gene designation" value="sumo1.S"/>
</dbReference>
<dbReference type="OrthoDB" id="442921at2759"/>
<dbReference type="Proteomes" id="UP000186698">
    <property type="component" value="Chromosome 9_10S"/>
</dbReference>
<dbReference type="Bgee" id="779181">
    <property type="expression patterns" value="Expressed in gastrula and 19 other cell types or tissues"/>
</dbReference>
<dbReference type="GO" id="GO:0005737">
    <property type="term" value="C:cytoplasm"/>
    <property type="evidence" value="ECO:0007669"/>
    <property type="project" value="UniProtKB-SubCell"/>
</dbReference>
<dbReference type="GO" id="GO:0031965">
    <property type="term" value="C:nuclear membrane"/>
    <property type="evidence" value="ECO:0007669"/>
    <property type="project" value="UniProtKB-SubCell"/>
</dbReference>
<dbReference type="GO" id="GO:0016607">
    <property type="term" value="C:nuclear speck"/>
    <property type="evidence" value="ECO:0007669"/>
    <property type="project" value="UniProtKB-SubCell"/>
</dbReference>
<dbReference type="GO" id="GO:0005634">
    <property type="term" value="C:nucleus"/>
    <property type="evidence" value="ECO:0000318"/>
    <property type="project" value="GO_Central"/>
</dbReference>
<dbReference type="GO" id="GO:0005886">
    <property type="term" value="C:plasma membrane"/>
    <property type="evidence" value="ECO:0007669"/>
    <property type="project" value="UniProtKB-SubCell"/>
</dbReference>
<dbReference type="GO" id="GO:0016605">
    <property type="term" value="C:PML body"/>
    <property type="evidence" value="ECO:0007669"/>
    <property type="project" value="UniProtKB-SubCell"/>
</dbReference>
<dbReference type="GO" id="GO:0031386">
    <property type="term" value="F:protein tag activity"/>
    <property type="evidence" value="ECO:0000318"/>
    <property type="project" value="GO_Central"/>
</dbReference>
<dbReference type="GO" id="GO:0008134">
    <property type="term" value="F:transcription factor binding"/>
    <property type="evidence" value="ECO:0000250"/>
    <property type="project" value="AgBase"/>
</dbReference>
<dbReference type="GO" id="GO:0044389">
    <property type="term" value="F:ubiquitin-like protein ligase binding"/>
    <property type="evidence" value="ECO:0000318"/>
    <property type="project" value="GO_Central"/>
</dbReference>
<dbReference type="GO" id="GO:0016925">
    <property type="term" value="P:protein sumoylation"/>
    <property type="evidence" value="ECO:0000250"/>
    <property type="project" value="AgBase"/>
</dbReference>
<dbReference type="CDD" id="cd16114">
    <property type="entry name" value="Ubl_SUMO1"/>
    <property type="match status" value="1"/>
</dbReference>
<dbReference type="FunFam" id="3.10.20.90:FF:000092">
    <property type="entry name" value="Small ubiquitin-related modifier"/>
    <property type="match status" value="1"/>
</dbReference>
<dbReference type="Gene3D" id="3.10.20.90">
    <property type="entry name" value="Phosphatidylinositol 3-kinase Catalytic Subunit, Chain A, domain 1"/>
    <property type="match status" value="1"/>
</dbReference>
<dbReference type="InterPro" id="IPR022617">
    <property type="entry name" value="Rad60/SUMO-like_dom"/>
</dbReference>
<dbReference type="InterPro" id="IPR046332">
    <property type="entry name" value="SUMO1_Ubl"/>
</dbReference>
<dbReference type="InterPro" id="IPR000626">
    <property type="entry name" value="Ubiquitin-like_dom"/>
</dbReference>
<dbReference type="InterPro" id="IPR029071">
    <property type="entry name" value="Ubiquitin-like_domsf"/>
</dbReference>
<dbReference type="PANTHER" id="PTHR10562">
    <property type="entry name" value="SMALL UBIQUITIN-RELATED MODIFIER"/>
    <property type="match status" value="1"/>
</dbReference>
<dbReference type="Pfam" id="PF11976">
    <property type="entry name" value="Rad60-SLD"/>
    <property type="match status" value="1"/>
</dbReference>
<dbReference type="SMART" id="SM00213">
    <property type="entry name" value="UBQ"/>
    <property type="match status" value="1"/>
</dbReference>
<dbReference type="SUPFAM" id="SSF54236">
    <property type="entry name" value="Ubiquitin-like"/>
    <property type="match status" value="1"/>
</dbReference>
<dbReference type="PROSITE" id="PS50053">
    <property type="entry name" value="UBIQUITIN_2"/>
    <property type="match status" value="1"/>
</dbReference>
<comment type="function">
    <text evidence="2 3">Ubiquitin-like protein that can be covalently attached to proteins as a monomer or a lysine-linked polymer (By similarity). Covalent attachment via an isopeptide bond to its substrates requires prior activation by the E1 complex sae1-sae2 and linkage to the E2 enzyme ube2i. This post-translational modification on lysine residues of proteins plays a crucial role in a number of cellular processes such as nuclear transport, DNA replication and repair, mitosis and signal transduction. Polymeric sumo1 chains are also susceptible to polyubiquitination which functions as a signal for proteasomal degradation of modified proteins (By similarity).</text>
</comment>
<comment type="subunit">
    <text evidence="2 3">Interacts with sae2, ube2i, ranbp2, pias1 and pias2 (By similarity). Interacts with sox9 and sox10 (By similarity). Covalently attached to a number of proteins (By similarity).</text>
</comment>
<comment type="subcellular location">
    <subcellularLocation>
        <location evidence="3">Nucleus membrane</location>
    </subcellularLocation>
    <subcellularLocation>
        <location evidence="4">Nucleus speckle</location>
    </subcellularLocation>
    <subcellularLocation>
        <location evidence="3">Cytoplasm</location>
    </subcellularLocation>
    <subcellularLocation>
        <location evidence="3">Nucleus</location>
        <location evidence="3">PML body</location>
    </subcellularLocation>
    <subcellularLocation>
        <location evidence="3">Cell membrane</location>
    </subcellularLocation>
    <subcellularLocation>
        <location evidence="3">Nucleus</location>
    </subcellularLocation>
</comment>
<comment type="PTM">
    <text evidence="3">Cleavage of precursor form by a sentrin-specific protease is necessary for function.</text>
</comment>
<comment type="similarity">
    <text evidence="6">Belongs to the ubiquitin family. SUMO subfamily.</text>
</comment>
<evidence type="ECO:0000250" key="1"/>
<evidence type="ECO:0000250" key="2">
    <source>
        <dbReference type="UniProtKB" id="O57686"/>
    </source>
</evidence>
<evidence type="ECO:0000250" key="3">
    <source>
        <dbReference type="UniProtKB" id="P63165"/>
    </source>
</evidence>
<evidence type="ECO:0000250" key="4">
    <source>
        <dbReference type="UniProtKB" id="P63166"/>
    </source>
</evidence>
<evidence type="ECO:0000255" key="5">
    <source>
        <dbReference type="PROSITE-ProRule" id="PRU00214"/>
    </source>
</evidence>
<evidence type="ECO:0000305" key="6"/>